<sequence length="439" mass="48289">MVDIIKTNATFKAGKGNKGTLSFEIPAKQISSGIDQAFNKQKDKINIPGFRKGHVSKELFLARFGEEALYEDALNAILPDIYDQAVNEADITVVGQPQIIPDDLKHGGPWKIHAEVTLAPTVELGDYKGVEVEKESDEVSDKELNAELERLQKGEAELVPAKEDQVSEKGDTVVIDFDGSVDGKQFDGGKAQNFSLSLGSGQFIPGFEDQLVGHKAGDDVDVKVTFPKNYQAKNLAGKEAVFAVTIHELKKLETPALDNEFAKDVDDSVSSLEELKAKTKEKLAKDKAEKNKDAFEDAAIQKVVDGAKINPEKLPEEMINDDVSRQMQTFFNNLAGQGVKPEMYFQITGTSQEQLKQQMTEGAPNRVKTNLVLEEIARVEKINPSNEEIDKEIKSLASEYNIKESEVEKSVSAGMLSHDLKVQQAVELIVNSAQAVEKK</sequence>
<comment type="function">
    <text evidence="1">Involved in protein export. Acts as a chaperone by maintaining the newly synthesized protein in an open conformation. Functions as a peptidyl-prolyl cis-trans isomerase.</text>
</comment>
<comment type="catalytic activity">
    <reaction evidence="1">
        <text>[protein]-peptidylproline (omega=180) = [protein]-peptidylproline (omega=0)</text>
        <dbReference type="Rhea" id="RHEA:16237"/>
        <dbReference type="Rhea" id="RHEA-COMP:10747"/>
        <dbReference type="Rhea" id="RHEA-COMP:10748"/>
        <dbReference type="ChEBI" id="CHEBI:83833"/>
        <dbReference type="ChEBI" id="CHEBI:83834"/>
        <dbReference type="EC" id="5.2.1.8"/>
    </reaction>
</comment>
<comment type="subcellular location">
    <subcellularLocation>
        <location>Cytoplasm</location>
    </subcellularLocation>
    <text evidence="1">About half TF is bound to the ribosome near the polypeptide exit tunnel while the other half is free in the cytoplasm.</text>
</comment>
<comment type="domain">
    <text evidence="1">Consists of 3 domains; the N-terminus binds the ribosome, the middle domain has PPIase activity, while the C-terminus has intrinsic chaperone activity on its own.</text>
</comment>
<comment type="similarity">
    <text evidence="1">Belongs to the FKBP-type PPIase family. Tig subfamily.</text>
</comment>
<dbReference type="EC" id="5.2.1.8" evidence="1"/>
<dbReference type="EMBL" id="CP000411">
    <property type="protein sequence ID" value="ABJ57574.1"/>
    <property type="molecule type" value="Genomic_DNA"/>
</dbReference>
<dbReference type="RefSeq" id="WP_002819585.1">
    <property type="nucleotide sequence ID" value="NC_008528.1"/>
</dbReference>
<dbReference type="SMR" id="Q04D98"/>
<dbReference type="STRING" id="203123.OEOE_1730"/>
<dbReference type="GeneID" id="75066638"/>
<dbReference type="KEGG" id="ooe:OEOE_1730"/>
<dbReference type="eggNOG" id="COG0544">
    <property type="taxonomic scope" value="Bacteria"/>
</dbReference>
<dbReference type="HOGENOM" id="CLU_033058_3_2_9"/>
<dbReference type="Proteomes" id="UP000000774">
    <property type="component" value="Chromosome"/>
</dbReference>
<dbReference type="GO" id="GO:0005737">
    <property type="term" value="C:cytoplasm"/>
    <property type="evidence" value="ECO:0007669"/>
    <property type="project" value="UniProtKB-SubCell"/>
</dbReference>
<dbReference type="GO" id="GO:0003755">
    <property type="term" value="F:peptidyl-prolyl cis-trans isomerase activity"/>
    <property type="evidence" value="ECO:0007669"/>
    <property type="project" value="UniProtKB-UniRule"/>
</dbReference>
<dbReference type="GO" id="GO:0044183">
    <property type="term" value="F:protein folding chaperone"/>
    <property type="evidence" value="ECO:0007669"/>
    <property type="project" value="TreeGrafter"/>
</dbReference>
<dbReference type="GO" id="GO:0043022">
    <property type="term" value="F:ribosome binding"/>
    <property type="evidence" value="ECO:0007669"/>
    <property type="project" value="TreeGrafter"/>
</dbReference>
<dbReference type="GO" id="GO:0051083">
    <property type="term" value="P:'de novo' cotranslational protein folding"/>
    <property type="evidence" value="ECO:0007669"/>
    <property type="project" value="TreeGrafter"/>
</dbReference>
<dbReference type="GO" id="GO:0051301">
    <property type="term" value="P:cell division"/>
    <property type="evidence" value="ECO:0007669"/>
    <property type="project" value="UniProtKB-KW"/>
</dbReference>
<dbReference type="GO" id="GO:0061077">
    <property type="term" value="P:chaperone-mediated protein folding"/>
    <property type="evidence" value="ECO:0007669"/>
    <property type="project" value="TreeGrafter"/>
</dbReference>
<dbReference type="GO" id="GO:0015031">
    <property type="term" value="P:protein transport"/>
    <property type="evidence" value="ECO:0007669"/>
    <property type="project" value="UniProtKB-UniRule"/>
</dbReference>
<dbReference type="GO" id="GO:0043335">
    <property type="term" value="P:protein unfolding"/>
    <property type="evidence" value="ECO:0007669"/>
    <property type="project" value="TreeGrafter"/>
</dbReference>
<dbReference type="FunFam" id="3.10.50.40:FF:000001">
    <property type="entry name" value="Trigger factor"/>
    <property type="match status" value="1"/>
</dbReference>
<dbReference type="Gene3D" id="3.10.50.40">
    <property type="match status" value="1"/>
</dbReference>
<dbReference type="Gene3D" id="3.30.70.1050">
    <property type="entry name" value="Trigger factor ribosome-binding domain"/>
    <property type="match status" value="1"/>
</dbReference>
<dbReference type="Gene3D" id="1.10.3120.10">
    <property type="entry name" value="Trigger factor, C-terminal domain"/>
    <property type="match status" value="1"/>
</dbReference>
<dbReference type="HAMAP" id="MF_00303">
    <property type="entry name" value="Trigger_factor_Tig"/>
    <property type="match status" value="1"/>
</dbReference>
<dbReference type="InterPro" id="IPR046357">
    <property type="entry name" value="PPIase_dom_sf"/>
</dbReference>
<dbReference type="InterPro" id="IPR001179">
    <property type="entry name" value="PPIase_FKBP_dom"/>
</dbReference>
<dbReference type="InterPro" id="IPR005215">
    <property type="entry name" value="Trig_fac"/>
</dbReference>
<dbReference type="InterPro" id="IPR008880">
    <property type="entry name" value="Trigger_fac_C"/>
</dbReference>
<dbReference type="InterPro" id="IPR037041">
    <property type="entry name" value="Trigger_fac_C_sf"/>
</dbReference>
<dbReference type="InterPro" id="IPR008881">
    <property type="entry name" value="Trigger_fac_ribosome-bd_bac"/>
</dbReference>
<dbReference type="InterPro" id="IPR036611">
    <property type="entry name" value="Trigger_fac_ribosome-bd_sf"/>
</dbReference>
<dbReference type="InterPro" id="IPR027304">
    <property type="entry name" value="Trigger_fact/SurA_dom_sf"/>
</dbReference>
<dbReference type="NCBIfam" id="TIGR00115">
    <property type="entry name" value="tig"/>
    <property type="match status" value="1"/>
</dbReference>
<dbReference type="PANTHER" id="PTHR30560">
    <property type="entry name" value="TRIGGER FACTOR CHAPERONE AND PEPTIDYL-PROLYL CIS/TRANS ISOMERASE"/>
    <property type="match status" value="1"/>
</dbReference>
<dbReference type="PANTHER" id="PTHR30560:SF3">
    <property type="entry name" value="TRIGGER FACTOR-LIKE PROTEIN TIG, CHLOROPLASTIC"/>
    <property type="match status" value="1"/>
</dbReference>
<dbReference type="Pfam" id="PF00254">
    <property type="entry name" value="FKBP_C"/>
    <property type="match status" value="1"/>
</dbReference>
<dbReference type="Pfam" id="PF05698">
    <property type="entry name" value="Trigger_C"/>
    <property type="match status" value="1"/>
</dbReference>
<dbReference type="Pfam" id="PF05697">
    <property type="entry name" value="Trigger_N"/>
    <property type="match status" value="1"/>
</dbReference>
<dbReference type="PIRSF" id="PIRSF003095">
    <property type="entry name" value="Trigger_factor"/>
    <property type="match status" value="1"/>
</dbReference>
<dbReference type="SUPFAM" id="SSF54534">
    <property type="entry name" value="FKBP-like"/>
    <property type="match status" value="1"/>
</dbReference>
<dbReference type="SUPFAM" id="SSF109998">
    <property type="entry name" value="Triger factor/SurA peptide-binding domain-like"/>
    <property type="match status" value="1"/>
</dbReference>
<dbReference type="SUPFAM" id="SSF102735">
    <property type="entry name" value="Trigger factor ribosome-binding domain"/>
    <property type="match status" value="1"/>
</dbReference>
<dbReference type="PROSITE" id="PS50059">
    <property type="entry name" value="FKBP_PPIASE"/>
    <property type="match status" value="1"/>
</dbReference>
<gene>
    <name evidence="1" type="primary">tig</name>
    <name type="ordered locus">OEOE_1730</name>
</gene>
<proteinExistence type="inferred from homology"/>
<organism>
    <name type="scientific">Oenococcus oeni (strain ATCC BAA-331 / PSU-1)</name>
    <dbReference type="NCBI Taxonomy" id="203123"/>
    <lineage>
        <taxon>Bacteria</taxon>
        <taxon>Bacillati</taxon>
        <taxon>Bacillota</taxon>
        <taxon>Bacilli</taxon>
        <taxon>Lactobacillales</taxon>
        <taxon>Lactobacillaceae</taxon>
        <taxon>Oenococcus</taxon>
    </lineage>
</organism>
<name>TIG_OENOB</name>
<keyword id="KW-0131">Cell cycle</keyword>
<keyword id="KW-0132">Cell division</keyword>
<keyword id="KW-0143">Chaperone</keyword>
<keyword id="KW-0963">Cytoplasm</keyword>
<keyword id="KW-0413">Isomerase</keyword>
<keyword id="KW-1185">Reference proteome</keyword>
<keyword id="KW-0697">Rotamase</keyword>
<feature type="chain" id="PRO_1000022722" description="Trigger factor">
    <location>
        <begin position="1"/>
        <end position="439"/>
    </location>
</feature>
<feature type="domain" description="PPIase FKBP-type" evidence="1">
    <location>
        <begin position="170"/>
        <end position="255"/>
    </location>
</feature>
<evidence type="ECO:0000255" key="1">
    <source>
        <dbReference type="HAMAP-Rule" id="MF_00303"/>
    </source>
</evidence>
<reference key="1">
    <citation type="journal article" date="2006" name="Proc. Natl. Acad. Sci. U.S.A.">
        <title>Comparative genomics of the lactic acid bacteria.</title>
        <authorList>
            <person name="Makarova K.S."/>
            <person name="Slesarev A."/>
            <person name="Wolf Y.I."/>
            <person name="Sorokin A."/>
            <person name="Mirkin B."/>
            <person name="Koonin E.V."/>
            <person name="Pavlov A."/>
            <person name="Pavlova N."/>
            <person name="Karamychev V."/>
            <person name="Polouchine N."/>
            <person name="Shakhova V."/>
            <person name="Grigoriev I."/>
            <person name="Lou Y."/>
            <person name="Rohksar D."/>
            <person name="Lucas S."/>
            <person name="Huang K."/>
            <person name="Goodstein D.M."/>
            <person name="Hawkins T."/>
            <person name="Plengvidhya V."/>
            <person name="Welker D."/>
            <person name="Hughes J."/>
            <person name="Goh Y."/>
            <person name="Benson A."/>
            <person name="Baldwin K."/>
            <person name="Lee J.-H."/>
            <person name="Diaz-Muniz I."/>
            <person name="Dosti B."/>
            <person name="Smeianov V."/>
            <person name="Wechter W."/>
            <person name="Barabote R."/>
            <person name="Lorca G."/>
            <person name="Altermann E."/>
            <person name="Barrangou R."/>
            <person name="Ganesan B."/>
            <person name="Xie Y."/>
            <person name="Rawsthorne H."/>
            <person name="Tamir D."/>
            <person name="Parker C."/>
            <person name="Breidt F."/>
            <person name="Broadbent J.R."/>
            <person name="Hutkins R."/>
            <person name="O'Sullivan D."/>
            <person name="Steele J."/>
            <person name="Unlu G."/>
            <person name="Saier M.H. Jr."/>
            <person name="Klaenhammer T."/>
            <person name="Richardson P."/>
            <person name="Kozyavkin S."/>
            <person name="Weimer B.C."/>
            <person name="Mills D.A."/>
        </authorList>
    </citation>
    <scope>NUCLEOTIDE SEQUENCE [LARGE SCALE GENOMIC DNA]</scope>
    <source>
        <strain>ATCC BAA-331 / PSU-1</strain>
    </source>
</reference>
<protein>
    <recommendedName>
        <fullName evidence="1">Trigger factor</fullName>
        <shortName evidence="1">TF</shortName>
        <ecNumber evidence="1">5.2.1.8</ecNumber>
    </recommendedName>
    <alternativeName>
        <fullName evidence="1">PPIase</fullName>
    </alternativeName>
</protein>
<accession>Q04D98</accession>